<protein>
    <recommendedName>
        <fullName evidence="1">N-acetyl-gamma-glutamyl-phosphate reductase</fullName>
        <shortName evidence="1">AGPR</shortName>
        <ecNumber evidence="1">1.2.1.38</ecNumber>
    </recommendedName>
    <alternativeName>
        <fullName evidence="1">N-acetyl-glutamate semialdehyde dehydrogenase</fullName>
        <shortName evidence="1">NAGSA dehydrogenase</shortName>
    </alternativeName>
</protein>
<keyword id="KW-0028">Amino-acid biosynthesis</keyword>
<keyword id="KW-0055">Arginine biosynthesis</keyword>
<keyword id="KW-0963">Cytoplasm</keyword>
<keyword id="KW-0521">NADP</keyword>
<keyword id="KW-0560">Oxidoreductase</keyword>
<dbReference type="EC" id="1.2.1.38" evidence="1"/>
<dbReference type="EMBL" id="AP009179">
    <property type="protein sequence ID" value="BAF72257.1"/>
    <property type="molecule type" value="Genomic_DNA"/>
</dbReference>
<dbReference type="RefSeq" id="WP_011980990.1">
    <property type="nucleotide sequence ID" value="NC_009663.1"/>
</dbReference>
<dbReference type="SMR" id="A6Q9U8"/>
<dbReference type="STRING" id="387093.SUN_1304"/>
<dbReference type="KEGG" id="sun:SUN_1304"/>
<dbReference type="eggNOG" id="COG0002">
    <property type="taxonomic scope" value="Bacteria"/>
</dbReference>
<dbReference type="HOGENOM" id="CLU_006384_0_1_7"/>
<dbReference type="UniPathway" id="UPA00068">
    <property type="reaction ID" value="UER00108"/>
</dbReference>
<dbReference type="Proteomes" id="UP000006378">
    <property type="component" value="Chromosome"/>
</dbReference>
<dbReference type="GO" id="GO:0005737">
    <property type="term" value="C:cytoplasm"/>
    <property type="evidence" value="ECO:0007669"/>
    <property type="project" value="UniProtKB-SubCell"/>
</dbReference>
<dbReference type="GO" id="GO:0003942">
    <property type="term" value="F:N-acetyl-gamma-glutamyl-phosphate reductase activity"/>
    <property type="evidence" value="ECO:0007669"/>
    <property type="project" value="UniProtKB-UniRule"/>
</dbReference>
<dbReference type="GO" id="GO:0051287">
    <property type="term" value="F:NAD binding"/>
    <property type="evidence" value="ECO:0007669"/>
    <property type="project" value="InterPro"/>
</dbReference>
<dbReference type="GO" id="GO:0070401">
    <property type="term" value="F:NADP+ binding"/>
    <property type="evidence" value="ECO:0007669"/>
    <property type="project" value="InterPro"/>
</dbReference>
<dbReference type="GO" id="GO:0006526">
    <property type="term" value="P:L-arginine biosynthetic process"/>
    <property type="evidence" value="ECO:0007669"/>
    <property type="project" value="UniProtKB-UniRule"/>
</dbReference>
<dbReference type="CDD" id="cd23934">
    <property type="entry name" value="AGPR_1_C"/>
    <property type="match status" value="1"/>
</dbReference>
<dbReference type="CDD" id="cd17895">
    <property type="entry name" value="AGPR_1_N"/>
    <property type="match status" value="1"/>
</dbReference>
<dbReference type="Gene3D" id="3.30.360.10">
    <property type="entry name" value="Dihydrodipicolinate Reductase, domain 2"/>
    <property type="match status" value="1"/>
</dbReference>
<dbReference type="Gene3D" id="3.40.50.720">
    <property type="entry name" value="NAD(P)-binding Rossmann-like Domain"/>
    <property type="match status" value="1"/>
</dbReference>
<dbReference type="HAMAP" id="MF_00150">
    <property type="entry name" value="ArgC_type1"/>
    <property type="match status" value="1"/>
</dbReference>
<dbReference type="InterPro" id="IPR023013">
    <property type="entry name" value="AGPR_AS"/>
</dbReference>
<dbReference type="InterPro" id="IPR000706">
    <property type="entry name" value="AGPR_type-1"/>
</dbReference>
<dbReference type="InterPro" id="IPR036291">
    <property type="entry name" value="NAD(P)-bd_dom_sf"/>
</dbReference>
<dbReference type="InterPro" id="IPR050085">
    <property type="entry name" value="NAGSA_dehydrogenase"/>
</dbReference>
<dbReference type="InterPro" id="IPR000534">
    <property type="entry name" value="Semialdehyde_DH_NAD-bd"/>
</dbReference>
<dbReference type="NCBIfam" id="TIGR01850">
    <property type="entry name" value="argC"/>
    <property type="match status" value="1"/>
</dbReference>
<dbReference type="PANTHER" id="PTHR32338:SF10">
    <property type="entry name" value="N-ACETYL-GAMMA-GLUTAMYL-PHOSPHATE REDUCTASE, CHLOROPLASTIC-RELATED"/>
    <property type="match status" value="1"/>
</dbReference>
<dbReference type="PANTHER" id="PTHR32338">
    <property type="entry name" value="N-ACETYL-GAMMA-GLUTAMYL-PHOSPHATE REDUCTASE, CHLOROPLASTIC-RELATED-RELATED"/>
    <property type="match status" value="1"/>
</dbReference>
<dbReference type="Pfam" id="PF01118">
    <property type="entry name" value="Semialdhyde_dh"/>
    <property type="match status" value="1"/>
</dbReference>
<dbReference type="Pfam" id="PF22698">
    <property type="entry name" value="Semialdhyde_dhC_1"/>
    <property type="match status" value="1"/>
</dbReference>
<dbReference type="SMART" id="SM00859">
    <property type="entry name" value="Semialdhyde_dh"/>
    <property type="match status" value="1"/>
</dbReference>
<dbReference type="SUPFAM" id="SSF55347">
    <property type="entry name" value="Glyceraldehyde-3-phosphate dehydrogenase-like, C-terminal domain"/>
    <property type="match status" value="1"/>
</dbReference>
<dbReference type="SUPFAM" id="SSF51735">
    <property type="entry name" value="NAD(P)-binding Rossmann-fold domains"/>
    <property type="match status" value="1"/>
</dbReference>
<dbReference type="PROSITE" id="PS01224">
    <property type="entry name" value="ARGC"/>
    <property type="match status" value="1"/>
</dbReference>
<accession>A6Q9U8</accession>
<reference key="1">
    <citation type="journal article" date="2007" name="Proc. Natl. Acad. Sci. U.S.A.">
        <title>Deep-sea vent epsilon-proteobacterial genomes provide insights into emergence of pathogens.</title>
        <authorList>
            <person name="Nakagawa S."/>
            <person name="Takaki Y."/>
            <person name="Shimamura S."/>
            <person name="Reysenbach A.-L."/>
            <person name="Takai K."/>
            <person name="Horikoshi K."/>
        </authorList>
    </citation>
    <scope>NUCLEOTIDE SEQUENCE [LARGE SCALE GENOMIC DNA]</scope>
    <source>
        <strain>NBC37-1</strain>
    </source>
</reference>
<comment type="function">
    <text evidence="1">Catalyzes the NADPH-dependent reduction of N-acetyl-5-glutamyl phosphate to yield N-acetyl-L-glutamate 5-semialdehyde.</text>
</comment>
<comment type="catalytic activity">
    <reaction evidence="1">
        <text>N-acetyl-L-glutamate 5-semialdehyde + phosphate + NADP(+) = N-acetyl-L-glutamyl 5-phosphate + NADPH + H(+)</text>
        <dbReference type="Rhea" id="RHEA:21588"/>
        <dbReference type="ChEBI" id="CHEBI:15378"/>
        <dbReference type="ChEBI" id="CHEBI:29123"/>
        <dbReference type="ChEBI" id="CHEBI:43474"/>
        <dbReference type="ChEBI" id="CHEBI:57783"/>
        <dbReference type="ChEBI" id="CHEBI:57936"/>
        <dbReference type="ChEBI" id="CHEBI:58349"/>
        <dbReference type="EC" id="1.2.1.38"/>
    </reaction>
</comment>
<comment type="pathway">
    <text evidence="1">Amino-acid biosynthesis; L-arginine biosynthesis; N(2)-acetyl-L-ornithine from L-glutamate: step 3/4.</text>
</comment>
<comment type="subcellular location">
    <subcellularLocation>
        <location evidence="1">Cytoplasm</location>
    </subcellularLocation>
</comment>
<comment type="similarity">
    <text evidence="1">Belongs to the NAGSA dehydrogenase family. Type 1 subfamily.</text>
</comment>
<organism>
    <name type="scientific">Sulfurovum sp. (strain NBC37-1)</name>
    <dbReference type="NCBI Taxonomy" id="387093"/>
    <lineage>
        <taxon>Bacteria</taxon>
        <taxon>Pseudomonadati</taxon>
        <taxon>Campylobacterota</taxon>
        <taxon>Epsilonproteobacteria</taxon>
        <taxon>Campylobacterales</taxon>
        <taxon>Sulfurovaceae</taxon>
        <taxon>Sulfurovum</taxon>
    </lineage>
</organism>
<evidence type="ECO:0000255" key="1">
    <source>
        <dbReference type="HAMAP-Rule" id="MF_00150"/>
    </source>
</evidence>
<sequence length="335" mass="36561">MIKVGVVGASGYTGLELVKMLITHPGFELTYLATTQGDTTIEALHPSLEGVVTLEVEKADVNAVADACELVFLALPHKASMGFAKGLIEKGVKVVDLSADYRLELDTYEAHYCEHEDKEHLDESVYALIEYYREELKEAELAAGPGCYPTATLLGILPFIPYIDTSAPLFVDAKSGVSGAGKKLSETTHFVTVNDNIFAYNPLKHRHAPEIAEKIEKVHGAKMNVNFVPHLIPATRGELVSVYATLKEDIDPLEVLRKHYANDRFIRIREKPVDIKSTAGTHFCDIYAAKNGHALFVSSAIDNLLRGASSQALAAANLMCGYDEGMGLPVIPYMP</sequence>
<feature type="chain" id="PRO_1000118064" description="N-acetyl-gamma-glutamyl-phosphate reductase">
    <location>
        <begin position="1"/>
        <end position="335"/>
    </location>
</feature>
<feature type="active site" evidence="1">
    <location>
        <position position="147"/>
    </location>
</feature>
<gene>
    <name evidence="1" type="primary">argC</name>
    <name type="ordered locus">SUN_1304</name>
</gene>
<name>ARGC_SULNB</name>
<proteinExistence type="inferred from homology"/>